<organism>
    <name type="scientific">Gemmatimonas aurantiaca (strain DSM 14586 / JCM 11422 / NBRC 100505 / T-27)</name>
    <dbReference type="NCBI Taxonomy" id="379066"/>
    <lineage>
        <taxon>Bacteria</taxon>
        <taxon>Pseudomonadati</taxon>
        <taxon>Gemmatimonadota</taxon>
        <taxon>Gemmatimonadia</taxon>
        <taxon>Gemmatimonadales</taxon>
        <taxon>Gemmatimonadaceae</taxon>
        <taxon>Gemmatimonas</taxon>
    </lineage>
</organism>
<reference key="1">
    <citation type="submission" date="2006-03" db="EMBL/GenBank/DDBJ databases">
        <title>Complete genome sequence of Gemmatimonas aurantiaca T-27 that represents a novel phylum Gemmatimonadetes.</title>
        <authorList>
            <person name="Takasaki K."/>
            <person name="Ichikawa N."/>
            <person name="Miura H."/>
            <person name="Matsushita S."/>
            <person name="Watanabe Y."/>
            <person name="Oguchi A."/>
            <person name="Ankai A."/>
            <person name="Yashiro I."/>
            <person name="Takahashi M."/>
            <person name="Terui Y."/>
            <person name="Fukui S."/>
            <person name="Yokoyama H."/>
            <person name="Tanikawa S."/>
            <person name="Hanada S."/>
            <person name="Kamagata Y."/>
            <person name="Fujita N."/>
        </authorList>
    </citation>
    <scope>NUCLEOTIDE SEQUENCE [LARGE SCALE GENOMIC DNA]</scope>
    <source>
        <strain>DSM 14586 / JCM 11422 / NBRC 100505 / T-27</strain>
    </source>
</reference>
<protein>
    <recommendedName>
        <fullName evidence="1">5'-nucleotidase SurE</fullName>
        <ecNumber evidence="1">3.1.3.5</ecNumber>
    </recommendedName>
    <alternativeName>
        <fullName evidence="1">Nucleoside 5'-monophosphate phosphohydrolase</fullName>
    </alternativeName>
</protein>
<accession>C1A8T7</accession>
<keyword id="KW-0963">Cytoplasm</keyword>
<keyword id="KW-0378">Hydrolase</keyword>
<keyword id="KW-0479">Metal-binding</keyword>
<keyword id="KW-0547">Nucleotide-binding</keyword>
<keyword id="KW-1185">Reference proteome</keyword>
<evidence type="ECO:0000255" key="1">
    <source>
        <dbReference type="HAMAP-Rule" id="MF_00060"/>
    </source>
</evidence>
<feature type="chain" id="PRO_1000202368" description="5'-nucleotidase SurE">
    <location>
        <begin position="1"/>
        <end position="252"/>
    </location>
</feature>
<feature type="binding site" evidence="1">
    <location>
        <position position="8"/>
    </location>
    <ligand>
        <name>a divalent metal cation</name>
        <dbReference type="ChEBI" id="CHEBI:60240"/>
    </ligand>
</feature>
<feature type="binding site" evidence="1">
    <location>
        <position position="9"/>
    </location>
    <ligand>
        <name>a divalent metal cation</name>
        <dbReference type="ChEBI" id="CHEBI:60240"/>
    </ligand>
</feature>
<feature type="binding site" evidence="1">
    <location>
        <position position="39"/>
    </location>
    <ligand>
        <name>a divalent metal cation</name>
        <dbReference type="ChEBI" id="CHEBI:60240"/>
    </ligand>
</feature>
<feature type="binding site" evidence="1">
    <location>
        <position position="91"/>
    </location>
    <ligand>
        <name>a divalent metal cation</name>
        <dbReference type="ChEBI" id="CHEBI:60240"/>
    </ligand>
</feature>
<name>SURE_GEMAT</name>
<dbReference type="EC" id="3.1.3.5" evidence="1"/>
<dbReference type="EMBL" id="AP009153">
    <property type="protein sequence ID" value="BAH38647.1"/>
    <property type="molecule type" value="Genomic_DNA"/>
</dbReference>
<dbReference type="RefSeq" id="WP_012683094.1">
    <property type="nucleotide sequence ID" value="NC_012489.1"/>
</dbReference>
<dbReference type="SMR" id="C1A8T7"/>
<dbReference type="STRING" id="379066.GAU_1605"/>
<dbReference type="KEGG" id="gau:GAU_1605"/>
<dbReference type="eggNOG" id="COG0496">
    <property type="taxonomic scope" value="Bacteria"/>
</dbReference>
<dbReference type="HOGENOM" id="CLU_045192_1_2_0"/>
<dbReference type="OrthoDB" id="9780815at2"/>
<dbReference type="Proteomes" id="UP000002209">
    <property type="component" value="Chromosome"/>
</dbReference>
<dbReference type="GO" id="GO:0005737">
    <property type="term" value="C:cytoplasm"/>
    <property type="evidence" value="ECO:0007669"/>
    <property type="project" value="UniProtKB-SubCell"/>
</dbReference>
<dbReference type="GO" id="GO:0008254">
    <property type="term" value="F:3'-nucleotidase activity"/>
    <property type="evidence" value="ECO:0007669"/>
    <property type="project" value="TreeGrafter"/>
</dbReference>
<dbReference type="GO" id="GO:0008253">
    <property type="term" value="F:5'-nucleotidase activity"/>
    <property type="evidence" value="ECO:0007669"/>
    <property type="project" value="UniProtKB-UniRule"/>
</dbReference>
<dbReference type="GO" id="GO:0004309">
    <property type="term" value="F:exopolyphosphatase activity"/>
    <property type="evidence" value="ECO:0007669"/>
    <property type="project" value="TreeGrafter"/>
</dbReference>
<dbReference type="GO" id="GO:0046872">
    <property type="term" value="F:metal ion binding"/>
    <property type="evidence" value="ECO:0007669"/>
    <property type="project" value="UniProtKB-UniRule"/>
</dbReference>
<dbReference type="GO" id="GO:0000166">
    <property type="term" value="F:nucleotide binding"/>
    <property type="evidence" value="ECO:0007669"/>
    <property type="project" value="UniProtKB-KW"/>
</dbReference>
<dbReference type="FunFam" id="3.40.1210.10:FF:000001">
    <property type="entry name" value="5'/3'-nucleotidase SurE"/>
    <property type="match status" value="1"/>
</dbReference>
<dbReference type="Gene3D" id="3.40.1210.10">
    <property type="entry name" value="Survival protein SurE-like phosphatase/nucleotidase"/>
    <property type="match status" value="1"/>
</dbReference>
<dbReference type="HAMAP" id="MF_00060">
    <property type="entry name" value="SurE"/>
    <property type="match status" value="1"/>
</dbReference>
<dbReference type="InterPro" id="IPR030048">
    <property type="entry name" value="SurE"/>
</dbReference>
<dbReference type="InterPro" id="IPR002828">
    <property type="entry name" value="SurE-like_Pase/nucleotidase"/>
</dbReference>
<dbReference type="InterPro" id="IPR036523">
    <property type="entry name" value="SurE-like_sf"/>
</dbReference>
<dbReference type="NCBIfam" id="NF001490">
    <property type="entry name" value="PRK00346.1-4"/>
    <property type="match status" value="1"/>
</dbReference>
<dbReference type="NCBIfam" id="TIGR00087">
    <property type="entry name" value="surE"/>
    <property type="match status" value="1"/>
</dbReference>
<dbReference type="PANTHER" id="PTHR30457">
    <property type="entry name" value="5'-NUCLEOTIDASE SURE"/>
    <property type="match status" value="1"/>
</dbReference>
<dbReference type="PANTHER" id="PTHR30457:SF12">
    <property type="entry name" value="5'_3'-NUCLEOTIDASE SURE"/>
    <property type="match status" value="1"/>
</dbReference>
<dbReference type="Pfam" id="PF01975">
    <property type="entry name" value="SurE"/>
    <property type="match status" value="1"/>
</dbReference>
<dbReference type="SUPFAM" id="SSF64167">
    <property type="entry name" value="SurE-like"/>
    <property type="match status" value="1"/>
</dbReference>
<sequence>MRILLSNDDGILAKGLGVLERAAESLGELHVVAPDREQSATSHSLTLHHPLRPVRLGERRWQVDGTPTDCVMLACEALLEARPDFVLSGINHGPNMGEDVLYSGTVAAAMEGLALGIPAIALSFAGNVLRADALLDTQVGAIRSLLHHLTGLPAFPADTLLNVNLPAVPGDEIRGIRLTRLGRRVFSDSIARMKDPWGRDILWIGGGSVEWSGAPDSDFRAVHDGYISVTPLHLDLTHRDVLNTSTEWWQEP</sequence>
<proteinExistence type="inferred from homology"/>
<comment type="function">
    <text evidence="1">Nucleotidase that shows phosphatase activity on nucleoside 5'-monophosphates.</text>
</comment>
<comment type="catalytic activity">
    <reaction evidence="1">
        <text>a ribonucleoside 5'-phosphate + H2O = a ribonucleoside + phosphate</text>
        <dbReference type="Rhea" id="RHEA:12484"/>
        <dbReference type="ChEBI" id="CHEBI:15377"/>
        <dbReference type="ChEBI" id="CHEBI:18254"/>
        <dbReference type="ChEBI" id="CHEBI:43474"/>
        <dbReference type="ChEBI" id="CHEBI:58043"/>
        <dbReference type="EC" id="3.1.3.5"/>
    </reaction>
</comment>
<comment type="cofactor">
    <cofactor evidence="1">
        <name>a divalent metal cation</name>
        <dbReference type="ChEBI" id="CHEBI:60240"/>
    </cofactor>
    <text evidence="1">Binds 1 divalent metal cation per subunit.</text>
</comment>
<comment type="subcellular location">
    <subcellularLocation>
        <location evidence="1">Cytoplasm</location>
    </subcellularLocation>
</comment>
<comment type="similarity">
    <text evidence="1">Belongs to the SurE nucleotidase family.</text>
</comment>
<gene>
    <name evidence="1" type="primary">surE</name>
    <name type="ordered locus">GAU_1605</name>
</gene>